<protein>
    <recommendedName>
        <fullName>Zinc finger and BTB domain-containing protein 16</fullName>
    </recommendedName>
    <alternativeName>
        <fullName>Promyelocytic leukemia zinc finger protein</fullName>
    </alternativeName>
    <alternativeName>
        <fullName>Zinc finger protein 145</fullName>
    </alternativeName>
    <alternativeName>
        <fullName>Zinc finger protein PLZF</fullName>
    </alternativeName>
</protein>
<proteinExistence type="evidence at protein level"/>
<name>ZBT16_HUMAN</name>
<feature type="chain" id="PRO_0000047729" description="Zinc finger and BTB domain-containing protein 16">
    <location>
        <begin position="1"/>
        <end position="673"/>
    </location>
</feature>
<feature type="domain" description="BTB" evidence="2">
    <location>
        <begin position="34"/>
        <end position="96"/>
    </location>
</feature>
<feature type="zinc finger region" description="C2H2-type 1" evidence="3">
    <location>
        <begin position="404"/>
        <end position="426"/>
    </location>
</feature>
<feature type="zinc finger region" description="C2H2-type 2" evidence="3">
    <location>
        <begin position="432"/>
        <end position="454"/>
    </location>
</feature>
<feature type="zinc finger region" description="C2H2-type 3" evidence="3">
    <location>
        <begin position="461"/>
        <end position="483"/>
    </location>
</feature>
<feature type="zinc finger region" description="C2H2-type 4" evidence="3">
    <location>
        <begin position="490"/>
        <end position="512"/>
    </location>
</feature>
<feature type="zinc finger region" description="C2H2-type 5" evidence="3">
    <location>
        <begin position="518"/>
        <end position="540"/>
    </location>
</feature>
<feature type="zinc finger region" description="C2H2-type 6" evidence="3">
    <location>
        <begin position="546"/>
        <end position="568"/>
    </location>
</feature>
<feature type="zinc finger region" description="C2H2-type 7" evidence="3">
    <location>
        <begin position="574"/>
        <end position="596"/>
    </location>
</feature>
<feature type="zinc finger region" description="C2H2-type 8" evidence="3">
    <location>
        <begin position="602"/>
        <end position="624"/>
    </location>
</feature>
<feature type="zinc finger region" description="C2H2-type 9" evidence="3">
    <location>
        <begin position="630"/>
        <end position="652"/>
    </location>
</feature>
<feature type="region of interest" description="Interaction with RUNX1T1" evidence="6">
    <location>
        <begin position="200"/>
        <end position="300"/>
    </location>
</feature>
<feature type="region of interest" description="Disordered" evidence="4">
    <location>
        <begin position="215"/>
        <end position="236"/>
    </location>
</feature>
<feature type="region of interest" description="Disordered" evidence="4">
    <location>
        <begin position="249"/>
        <end position="332"/>
    </location>
</feature>
<feature type="compositionally biased region" description="Basic and acidic residues" evidence="4">
    <location>
        <begin position="293"/>
        <end position="302"/>
    </location>
</feature>
<feature type="compositionally biased region" description="Basic and acidic residues" evidence="4">
    <location>
        <begin position="319"/>
        <end position="331"/>
    </location>
</feature>
<feature type="site" description="Breakpoint for translocation to form PLZF-RAR-alpha oncogene">
    <location>
        <begin position="394"/>
        <end position="395"/>
    </location>
</feature>
<feature type="modified residue" description="Phosphoserine; by PDPK1" evidence="1">
    <location>
        <position position="76"/>
    </location>
</feature>
<feature type="modified residue" description="Phosphoserine; by PDPK1" evidence="1">
    <location>
        <position position="184"/>
    </location>
</feature>
<feature type="modified residue" description="Phosphoserine; by PDPK1" evidence="1">
    <location>
        <position position="197"/>
    </location>
</feature>
<feature type="modified residue" description="Phosphoserine; by PDPK1" evidence="1">
    <location>
        <position position="256"/>
    </location>
</feature>
<feature type="modified residue" description="Phosphothreonine; by PDPK1" evidence="1">
    <location>
        <position position="282"/>
    </location>
</feature>
<feature type="modified residue" description="Phosphoserine; by PDPK1" evidence="1">
    <location>
        <position position="628"/>
    </location>
</feature>
<feature type="splice variant" id="VSP_006896" description="In isoform PLZFA." evidence="13">
    <location>
        <begin position="255"/>
        <end position="377"/>
    </location>
</feature>
<feature type="sequence variant" id="VAR_054912" description="In SGYMR; dbSNP:rs121434606." evidence="10">
    <original>M</original>
    <variation>V</variation>
    <location>
        <position position="617"/>
    </location>
</feature>
<feature type="sequence conflict" description="In Ref. 1; CAA79489." evidence="13" ref="1">
    <original>G</original>
    <variation>D</variation>
    <location>
        <position position="580"/>
    </location>
</feature>
<feature type="helix" evidence="14">
    <location>
        <begin position="16"/>
        <end position="30"/>
    </location>
</feature>
<feature type="turn" evidence="14">
    <location>
        <begin position="31"/>
        <end position="33"/>
    </location>
</feature>
<feature type="strand" evidence="14">
    <location>
        <begin position="36"/>
        <end position="42"/>
    </location>
</feature>
<feature type="strand" evidence="14">
    <location>
        <begin position="44"/>
        <end position="47"/>
    </location>
</feature>
<feature type="helix" evidence="14">
    <location>
        <begin position="49"/>
        <end position="55"/>
    </location>
</feature>
<feature type="helix" evidence="14">
    <location>
        <begin position="57"/>
        <end position="62"/>
    </location>
</feature>
<feature type="helix" evidence="15">
    <location>
        <begin position="63"/>
        <end position="65"/>
    </location>
</feature>
<feature type="strand" evidence="14">
    <location>
        <begin position="68"/>
        <end position="72"/>
    </location>
</feature>
<feature type="helix" evidence="14">
    <location>
        <begin position="77"/>
        <end position="89"/>
    </location>
</feature>
<feature type="helix" evidence="14">
    <location>
        <begin position="96"/>
        <end position="98"/>
    </location>
</feature>
<feature type="helix" evidence="14">
    <location>
        <begin position="99"/>
        <end position="109"/>
    </location>
</feature>
<feature type="helix" evidence="14">
    <location>
        <begin position="112"/>
        <end position="125"/>
    </location>
</feature>
<feature type="strand" evidence="16">
    <location>
        <begin position="288"/>
        <end position="290"/>
    </location>
</feature>
<dbReference type="EMBL" id="Z19002">
    <property type="protein sequence ID" value="CAA79489.1"/>
    <property type="molecule type" value="mRNA"/>
</dbReference>
<dbReference type="EMBL" id="AF060568">
    <property type="protein sequence ID" value="AAD03619.1"/>
    <property type="molecule type" value="Genomic_DNA"/>
</dbReference>
<dbReference type="EMBL" id="BC026902">
    <property type="protein sequence ID" value="AAH26902.1"/>
    <property type="molecule type" value="mRNA"/>
</dbReference>
<dbReference type="EMBL" id="BC029812">
    <property type="protein sequence ID" value="AAH29812.1"/>
    <property type="molecule type" value="mRNA"/>
</dbReference>
<dbReference type="EMBL" id="S60093">
    <property type="protein sequence ID" value="AAC60590.2"/>
    <property type="molecule type" value="Genomic_DNA"/>
</dbReference>
<dbReference type="CCDS" id="CCDS8367.1">
    <molecule id="Q05516-1"/>
</dbReference>
<dbReference type="PIR" id="S36336">
    <property type="entry name" value="S36336"/>
</dbReference>
<dbReference type="RefSeq" id="NP_001018011.1">
    <molecule id="Q05516-1"/>
    <property type="nucleotide sequence ID" value="NM_001018011.3"/>
</dbReference>
<dbReference type="RefSeq" id="NP_001341679.1">
    <molecule id="Q05516-1"/>
    <property type="nucleotide sequence ID" value="NM_001354750.2"/>
</dbReference>
<dbReference type="RefSeq" id="NP_001341680.1">
    <molecule id="Q05516-1"/>
    <property type="nucleotide sequence ID" value="NM_001354751.2"/>
</dbReference>
<dbReference type="RefSeq" id="NP_005997.2">
    <molecule id="Q05516-1"/>
    <property type="nucleotide sequence ID" value="NM_006006.4"/>
</dbReference>
<dbReference type="RefSeq" id="XP_016873746.1">
    <property type="nucleotide sequence ID" value="XM_017018257.1"/>
</dbReference>
<dbReference type="RefSeq" id="XP_016873747.1">
    <property type="nucleotide sequence ID" value="XM_017018258.1"/>
</dbReference>
<dbReference type="RefSeq" id="XP_016873748.1">
    <property type="nucleotide sequence ID" value="XM_017018259.1"/>
</dbReference>
<dbReference type="RefSeq" id="XP_054225863.1">
    <molecule id="Q05516-1"/>
    <property type="nucleotide sequence ID" value="XM_054369888.1"/>
</dbReference>
<dbReference type="PDB" id="1BUO">
    <property type="method" value="X-ray"/>
    <property type="resolution" value="1.90 A"/>
    <property type="chains" value="A=6-126"/>
</dbReference>
<dbReference type="PDB" id="1CS3">
    <property type="method" value="X-ray"/>
    <property type="resolution" value="2.00 A"/>
    <property type="chains" value="A=7-122"/>
</dbReference>
<dbReference type="PDB" id="8YTH">
    <property type="method" value="X-ray"/>
    <property type="resolution" value="2.40 A"/>
    <property type="chains" value="B=285-292"/>
</dbReference>
<dbReference type="PDBsum" id="1BUO"/>
<dbReference type="PDBsum" id="1CS3"/>
<dbReference type="PDBsum" id="8YTH"/>
<dbReference type="SMR" id="Q05516"/>
<dbReference type="BioGRID" id="113498">
    <property type="interactions" value="173"/>
</dbReference>
<dbReference type="CORUM" id="Q05516"/>
<dbReference type="DIP" id="DIP-2654N"/>
<dbReference type="FunCoup" id="Q05516">
    <property type="interactions" value="566"/>
</dbReference>
<dbReference type="IntAct" id="Q05516">
    <property type="interactions" value="126"/>
</dbReference>
<dbReference type="MINT" id="Q05516"/>
<dbReference type="STRING" id="9606.ENSP00000338157"/>
<dbReference type="BindingDB" id="Q05516"/>
<dbReference type="ChEMBL" id="CHEMBL4105726"/>
<dbReference type="MoonDB" id="Q05516">
    <property type="type" value="Predicted"/>
</dbReference>
<dbReference type="iPTMnet" id="Q05516"/>
<dbReference type="PhosphoSitePlus" id="Q05516"/>
<dbReference type="BioMuta" id="ZBTB16"/>
<dbReference type="DMDM" id="90109930"/>
<dbReference type="jPOST" id="Q05516"/>
<dbReference type="MassIVE" id="Q05516"/>
<dbReference type="PaxDb" id="9606-ENSP00000338157"/>
<dbReference type="PeptideAtlas" id="Q05516"/>
<dbReference type="ProteomicsDB" id="58332">
    <molecule id="Q05516-1"/>
</dbReference>
<dbReference type="ProteomicsDB" id="58333">
    <molecule id="Q05516-2"/>
</dbReference>
<dbReference type="ABCD" id="Q05516">
    <property type="antibodies" value="3 sequenced antibodies"/>
</dbReference>
<dbReference type="Antibodypedia" id="897">
    <property type="antibodies" value="397 antibodies from 38 providers"/>
</dbReference>
<dbReference type="DNASU" id="7704"/>
<dbReference type="Ensembl" id="ENST00000335953.9">
    <molecule id="Q05516-1"/>
    <property type="protein sequence ID" value="ENSP00000338157.4"/>
    <property type="gene ID" value="ENSG00000109906.15"/>
</dbReference>
<dbReference type="Ensembl" id="ENST00000392996.2">
    <molecule id="Q05516-1"/>
    <property type="protein sequence ID" value="ENSP00000376721.2"/>
    <property type="gene ID" value="ENSG00000109906.15"/>
</dbReference>
<dbReference type="Ensembl" id="ENST00000682278.1">
    <molecule id="Q05516-1"/>
    <property type="protein sequence ID" value="ENSP00000506794.1"/>
    <property type="gene ID" value="ENSG00000109906.15"/>
</dbReference>
<dbReference type="Ensembl" id="ENST00000682697.1">
    <molecule id="Q05516-1"/>
    <property type="protein sequence ID" value="ENSP00000506924.1"/>
    <property type="gene ID" value="ENSG00000109906.15"/>
</dbReference>
<dbReference type="Ensembl" id="ENST00000682971.1">
    <molecule id="Q05516-1"/>
    <property type="protein sequence ID" value="ENSP00000506894.1"/>
    <property type="gene ID" value="ENSG00000109906.15"/>
</dbReference>
<dbReference type="Ensembl" id="ENST00000683318.1">
    <molecule id="Q05516-1"/>
    <property type="protein sequence ID" value="ENSP00000508351.1"/>
    <property type="gene ID" value="ENSG00000109906.15"/>
</dbReference>
<dbReference type="Ensembl" id="ENST00000683554.1">
    <molecule id="Q05516-1"/>
    <property type="protein sequence ID" value="ENSP00000506953.1"/>
    <property type="gene ID" value="ENSG00000109906.15"/>
</dbReference>
<dbReference type="Ensembl" id="ENST00000684295.1">
    <molecule id="Q05516-1"/>
    <property type="protein sequence ID" value="ENSP00000507788.1"/>
    <property type="gene ID" value="ENSG00000109906.15"/>
</dbReference>
<dbReference type="GeneID" id="7704"/>
<dbReference type="KEGG" id="hsa:7704"/>
<dbReference type="MANE-Select" id="ENST00000335953.9">
    <property type="protein sequence ID" value="ENSP00000338157.4"/>
    <property type="RefSeq nucleotide sequence ID" value="NM_006006.6"/>
    <property type="RefSeq protein sequence ID" value="NP_005997.2"/>
</dbReference>
<dbReference type="UCSC" id="uc001pop.4">
    <molecule id="Q05516-1"/>
    <property type="organism name" value="human"/>
</dbReference>
<dbReference type="AGR" id="HGNC:12930"/>
<dbReference type="CTD" id="7704"/>
<dbReference type="DisGeNET" id="7704"/>
<dbReference type="GeneCards" id="ZBTB16"/>
<dbReference type="HGNC" id="HGNC:12930">
    <property type="gene designation" value="ZBTB16"/>
</dbReference>
<dbReference type="HPA" id="ENSG00000109906">
    <property type="expression patterns" value="Low tissue specificity"/>
</dbReference>
<dbReference type="MalaCards" id="ZBTB16"/>
<dbReference type="MIM" id="176797">
    <property type="type" value="gene"/>
</dbReference>
<dbReference type="MIM" id="612447">
    <property type="type" value="phenotype"/>
</dbReference>
<dbReference type="neXtProt" id="NX_Q05516"/>
<dbReference type="OpenTargets" id="ENSG00000109906"/>
<dbReference type="Orphanet" id="520">
    <property type="disease" value="Acute promyelocytic leukemia"/>
</dbReference>
<dbReference type="Orphanet" id="99861">
    <property type="disease" value="Precursor T-cell acute lymphoblastic leukemia"/>
</dbReference>
<dbReference type="PharmGKB" id="PA37517"/>
<dbReference type="VEuPathDB" id="HostDB:ENSG00000109906"/>
<dbReference type="eggNOG" id="KOG1721">
    <property type="taxonomic scope" value="Eukaryota"/>
</dbReference>
<dbReference type="GeneTree" id="ENSGT00940000154616"/>
<dbReference type="HOGENOM" id="CLU_026420_0_0_1"/>
<dbReference type="InParanoid" id="Q05516"/>
<dbReference type="OMA" id="NDTEANM"/>
<dbReference type="OrthoDB" id="8922241at2759"/>
<dbReference type="PAN-GO" id="Q05516">
    <property type="GO annotations" value="5 GO annotations based on evolutionary models"/>
</dbReference>
<dbReference type="PhylomeDB" id="Q05516"/>
<dbReference type="TreeFam" id="TF350825"/>
<dbReference type="PathwayCommons" id="Q05516"/>
<dbReference type="Reactome" id="R-HSA-8951664">
    <property type="pathway name" value="Neddylation"/>
</dbReference>
<dbReference type="Reactome" id="R-HSA-983168">
    <property type="pathway name" value="Antigen processing: Ubiquitination &amp; Proteasome degradation"/>
</dbReference>
<dbReference type="SignaLink" id="Q05516"/>
<dbReference type="SIGNOR" id="Q05516"/>
<dbReference type="UniPathway" id="UPA00143"/>
<dbReference type="BioGRID-ORCS" id="7704">
    <property type="hits" value="12 hits in 1214 CRISPR screens"/>
</dbReference>
<dbReference type="ChiTaRS" id="ZBTB16">
    <property type="organism name" value="human"/>
</dbReference>
<dbReference type="EvolutionaryTrace" id="Q05516"/>
<dbReference type="GeneWiki" id="Zinc_finger_and_BTB_domain-containing_protein_16"/>
<dbReference type="GenomeRNAi" id="7704"/>
<dbReference type="Pharos" id="Q05516">
    <property type="development level" value="Tbio"/>
</dbReference>
<dbReference type="PRO" id="PR:Q05516"/>
<dbReference type="Proteomes" id="UP000005640">
    <property type="component" value="Chromosome 11"/>
</dbReference>
<dbReference type="RNAct" id="Q05516">
    <property type="molecule type" value="protein"/>
</dbReference>
<dbReference type="Bgee" id="ENSG00000109906">
    <property type="expression patterns" value="Expressed in skin of hip and 205 other cell types or tissues"/>
</dbReference>
<dbReference type="ExpressionAtlas" id="Q05516">
    <property type="expression patterns" value="baseline and differential"/>
</dbReference>
<dbReference type="GO" id="GO:0005829">
    <property type="term" value="C:cytosol"/>
    <property type="evidence" value="ECO:0000304"/>
    <property type="project" value="Reactome"/>
</dbReference>
<dbReference type="GO" id="GO:0001673">
    <property type="term" value="C:male germ cell nucleus"/>
    <property type="evidence" value="ECO:0007669"/>
    <property type="project" value="Ensembl"/>
</dbReference>
<dbReference type="GO" id="GO:0016604">
    <property type="term" value="C:nuclear body"/>
    <property type="evidence" value="ECO:0000314"/>
    <property type="project" value="UniProtKB"/>
</dbReference>
<dbReference type="GO" id="GO:0016607">
    <property type="term" value="C:nuclear speck"/>
    <property type="evidence" value="ECO:0000314"/>
    <property type="project" value="UniProtKB"/>
</dbReference>
<dbReference type="GO" id="GO:0005634">
    <property type="term" value="C:nucleus"/>
    <property type="evidence" value="ECO:0000314"/>
    <property type="project" value="UniProtKB"/>
</dbReference>
<dbReference type="GO" id="GO:0016605">
    <property type="term" value="C:PML body"/>
    <property type="evidence" value="ECO:0000314"/>
    <property type="project" value="UniProtKB"/>
</dbReference>
<dbReference type="GO" id="GO:0032991">
    <property type="term" value="C:protein-containing complex"/>
    <property type="evidence" value="ECO:0000315"/>
    <property type="project" value="UniProtKB"/>
</dbReference>
<dbReference type="GO" id="GO:0017053">
    <property type="term" value="C:transcription repressor complex"/>
    <property type="evidence" value="ECO:0000314"/>
    <property type="project" value="MGI"/>
</dbReference>
<dbReference type="GO" id="GO:0003677">
    <property type="term" value="F:DNA binding"/>
    <property type="evidence" value="ECO:0000314"/>
    <property type="project" value="MGI"/>
</dbReference>
<dbReference type="GO" id="GO:0001228">
    <property type="term" value="F:DNA-binding transcription activator activity, RNA polymerase II-specific"/>
    <property type="evidence" value="ECO:0000318"/>
    <property type="project" value="GO_Central"/>
</dbReference>
<dbReference type="GO" id="GO:0001227">
    <property type="term" value="F:DNA-binding transcription repressor activity, RNA polymerase II-specific"/>
    <property type="evidence" value="ECO:0000314"/>
    <property type="project" value="NTNU_SB"/>
</dbReference>
<dbReference type="GO" id="GO:0042802">
    <property type="term" value="F:identical protein binding"/>
    <property type="evidence" value="ECO:0000353"/>
    <property type="project" value="IntAct"/>
</dbReference>
<dbReference type="GO" id="GO:0019904">
    <property type="term" value="F:protein domain specific binding"/>
    <property type="evidence" value="ECO:0007669"/>
    <property type="project" value="Ensembl"/>
</dbReference>
<dbReference type="GO" id="GO:0042803">
    <property type="term" value="F:protein homodimerization activity"/>
    <property type="evidence" value="ECO:0000314"/>
    <property type="project" value="UniProtKB"/>
</dbReference>
<dbReference type="GO" id="GO:0000978">
    <property type="term" value="F:RNA polymerase II cis-regulatory region sequence-specific DNA binding"/>
    <property type="evidence" value="ECO:0000314"/>
    <property type="project" value="UniProtKB"/>
</dbReference>
<dbReference type="GO" id="GO:0001222">
    <property type="term" value="F:transcription corepressor binding"/>
    <property type="evidence" value="ECO:0000353"/>
    <property type="project" value="UniProtKB"/>
</dbReference>
<dbReference type="GO" id="GO:0031703">
    <property type="term" value="F:type 2 angiotensin receptor binding"/>
    <property type="evidence" value="ECO:0007669"/>
    <property type="project" value="Ensembl"/>
</dbReference>
<dbReference type="GO" id="GO:0008270">
    <property type="term" value="F:zinc ion binding"/>
    <property type="evidence" value="ECO:0007669"/>
    <property type="project" value="UniProtKB-KW"/>
</dbReference>
<dbReference type="GO" id="GO:0009952">
    <property type="term" value="P:anterior/posterior pattern specification"/>
    <property type="evidence" value="ECO:0007669"/>
    <property type="project" value="Ensembl"/>
</dbReference>
<dbReference type="GO" id="GO:0006915">
    <property type="term" value="P:apoptotic process"/>
    <property type="evidence" value="ECO:0000303"/>
    <property type="project" value="UniProtKB"/>
</dbReference>
<dbReference type="GO" id="GO:0051216">
    <property type="term" value="P:cartilage development"/>
    <property type="evidence" value="ECO:0000314"/>
    <property type="project" value="UniProtKB"/>
</dbReference>
<dbReference type="GO" id="GO:0008283">
    <property type="term" value="P:cell population proliferation"/>
    <property type="evidence" value="ECO:0007669"/>
    <property type="project" value="Ensembl"/>
</dbReference>
<dbReference type="GO" id="GO:0007417">
    <property type="term" value="P:central nervous system development"/>
    <property type="evidence" value="ECO:0000250"/>
    <property type="project" value="UniProtKB"/>
</dbReference>
<dbReference type="GO" id="GO:0042733">
    <property type="term" value="P:embryonic digit morphogenesis"/>
    <property type="evidence" value="ECO:0007669"/>
    <property type="project" value="Ensembl"/>
</dbReference>
<dbReference type="GO" id="GO:0035116">
    <property type="term" value="P:embryonic hindlimb morphogenesis"/>
    <property type="evidence" value="ECO:0007669"/>
    <property type="project" value="Ensembl"/>
</dbReference>
<dbReference type="GO" id="GO:0009880">
    <property type="term" value="P:embryonic pattern specification"/>
    <property type="evidence" value="ECO:0007669"/>
    <property type="project" value="Ensembl"/>
</dbReference>
<dbReference type="GO" id="GO:0035136">
    <property type="term" value="P:forelimb morphogenesis"/>
    <property type="evidence" value="ECO:0007669"/>
    <property type="project" value="Ensembl"/>
</dbReference>
<dbReference type="GO" id="GO:0030097">
    <property type="term" value="P:hemopoiesis"/>
    <property type="evidence" value="ECO:0000314"/>
    <property type="project" value="UniProtKB"/>
</dbReference>
<dbReference type="GO" id="GO:0048133">
    <property type="term" value="P:male germ-line stem cell asymmetric division"/>
    <property type="evidence" value="ECO:0007669"/>
    <property type="project" value="Ensembl"/>
</dbReference>
<dbReference type="GO" id="GO:0001823">
    <property type="term" value="P:mesonephros development"/>
    <property type="evidence" value="ECO:0000250"/>
    <property type="project" value="UniProtKB"/>
</dbReference>
<dbReference type="GO" id="GO:0030099">
    <property type="term" value="P:myeloid cell differentiation"/>
    <property type="evidence" value="ECO:0000304"/>
    <property type="project" value="UniProtKB"/>
</dbReference>
<dbReference type="GO" id="GO:0008285">
    <property type="term" value="P:negative regulation of cell population proliferation"/>
    <property type="evidence" value="ECO:0007669"/>
    <property type="project" value="Ensembl"/>
</dbReference>
<dbReference type="GO" id="GO:0045892">
    <property type="term" value="P:negative regulation of DNA-templated transcription"/>
    <property type="evidence" value="ECO:0000314"/>
    <property type="project" value="UniProtKB"/>
</dbReference>
<dbReference type="GO" id="GO:0045638">
    <property type="term" value="P:negative regulation of myeloid cell differentiation"/>
    <property type="evidence" value="ECO:0000250"/>
    <property type="project" value="UniProtKB"/>
</dbReference>
<dbReference type="GO" id="GO:0000122">
    <property type="term" value="P:negative regulation of transcription by RNA polymerase II"/>
    <property type="evidence" value="ECO:0000314"/>
    <property type="project" value="UniProtKB"/>
</dbReference>
<dbReference type="GO" id="GO:0043931">
    <property type="term" value="P:ossification involved in bone maturation"/>
    <property type="evidence" value="ECO:0007669"/>
    <property type="project" value="Ensembl"/>
</dbReference>
<dbReference type="GO" id="GO:0043065">
    <property type="term" value="P:positive regulation of apoptotic process"/>
    <property type="evidence" value="ECO:0007669"/>
    <property type="project" value="Ensembl"/>
</dbReference>
<dbReference type="GO" id="GO:0061036">
    <property type="term" value="P:positive regulation of cartilage development"/>
    <property type="evidence" value="ECO:0000314"/>
    <property type="project" value="UniProtKB"/>
</dbReference>
<dbReference type="GO" id="GO:0032332">
    <property type="term" value="P:positive regulation of chondrocyte differentiation"/>
    <property type="evidence" value="ECO:0000315"/>
    <property type="project" value="UniProtKB"/>
</dbReference>
<dbReference type="GO" id="GO:0045893">
    <property type="term" value="P:positive regulation of DNA-templated transcription"/>
    <property type="evidence" value="ECO:0000314"/>
    <property type="project" value="UniProtKB"/>
</dbReference>
<dbReference type="GO" id="GO:0045600">
    <property type="term" value="P:positive regulation of fat cell differentiation"/>
    <property type="evidence" value="ECO:0000315"/>
    <property type="project" value="UniProtKB"/>
</dbReference>
<dbReference type="GO" id="GO:0051138">
    <property type="term" value="P:positive regulation of NK T cell differentiation"/>
    <property type="evidence" value="ECO:0007669"/>
    <property type="project" value="Ensembl"/>
</dbReference>
<dbReference type="GO" id="GO:0045778">
    <property type="term" value="P:positive regulation of ossification"/>
    <property type="evidence" value="ECO:0000314"/>
    <property type="project" value="UniProtKB"/>
</dbReference>
<dbReference type="GO" id="GO:0034504">
    <property type="term" value="P:protein localization to nucleus"/>
    <property type="evidence" value="ECO:0007669"/>
    <property type="project" value="Ensembl"/>
</dbReference>
<dbReference type="GO" id="GO:0016567">
    <property type="term" value="P:protein ubiquitination"/>
    <property type="evidence" value="ECO:0007669"/>
    <property type="project" value="UniProtKB-UniPathway"/>
</dbReference>
<dbReference type="GO" id="GO:0006357">
    <property type="term" value="P:regulation of transcription by RNA polymerase II"/>
    <property type="evidence" value="ECO:0000318"/>
    <property type="project" value="GO_Central"/>
</dbReference>
<dbReference type="CDD" id="cd18205">
    <property type="entry name" value="BTB_POZ_ZBTB16_PLZF"/>
    <property type="match status" value="1"/>
</dbReference>
<dbReference type="FunFam" id="3.30.160.60:FF:001818">
    <property type="entry name" value="GDNF-inducible zinc finger protein 1 isoform X1"/>
    <property type="match status" value="1"/>
</dbReference>
<dbReference type="FunFam" id="3.30.160.60:FF:000553">
    <property type="entry name" value="Zinc finger and BTB domain-containing protein 16"/>
    <property type="match status" value="1"/>
</dbReference>
<dbReference type="FunFam" id="3.30.160.60:FF:000792">
    <property type="entry name" value="Zinc finger and BTB domain-containing protein 16"/>
    <property type="match status" value="1"/>
</dbReference>
<dbReference type="FunFam" id="3.30.160.60:FF:001013">
    <property type="entry name" value="Zinc finger and BTB domain-containing protein 16"/>
    <property type="match status" value="1"/>
</dbReference>
<dbReference type="FunFam" id="3.30.160.60:FF:002171">
    <property type="entry name" value="Zinc finger and BTB domain-containing protein 16"/>
    <property type="match status" value="1"/>
</dbReference>
<dbReference type="FunFam" id="3.30.710.10:FF:000059">
    <property type="entry name" value="Zinc finger and BTB domain-containing protein 16"/>
    <property type="match status" value="1"/>
</dbReference>
<dbReference type="FunFam" id="3.30.160.60:FF:001082">
    <property type="entry name" value="zinc finger and BTB domain-containing protein 16"/>
    <property type="match status" value="1"/>
</dbReference>
<dbReference type="Gene3D" id="3.30.160.60">
    <property type="entry name" value="Classic Zinc Finger"/>
    <property type="match status" value="7"/>
</dbReference>
<dbReference type="Gene3D" id="3.30.710.10">
    <property type="entry name" value="Potassium Channel Kv1.1, Chain A"/>
    <property type="match status" value="1"/>
</dbReference>
<dbReference type="InterPro" id="IPR000210">
    <property type="entry name" value="BTB/POZ_dom"/>
</dbReference>
<dbReference type="InterPro" id="IPR011333">
    <property type="entry name" value="SKP1/BTB/POZ_sf"/>
</dbReference>
<dbReference type="InterPro" id="IPR036236">
    <property type="entry name" value="Znf_C2H2_sf"/>
</dbReference>
<dbReference type="InterPro" id="IPR013087">
    <property type="entry name" value="Znf_C2H2_type"/>
</dbReference>
<dbReference type="PANTHER" id="PTHR24390:SF159">
    <property type="entry name" value="GROWTH FACTOR INDEPENDENT 1 TRANSCRIPTIONAL REPRESSOR"/>
    <property type="match status" value="1"/>
</dbReference>
<dbReference type="PANTHER" id="PTHR24390">
    <property type="entry name" value="ZINC FINGER PROTEIN"/>
    <property type="match status" value="1"/>
</dbReference>
<dbReference type="Pfam" id="PF00651">
    <property type="entry name" value="BTB"/>
    <property type="match status" value="1"/>
</dbReference>
<dbReference type="Pfam" id="PF00096">
    <property type="entry name" value="zf-C2H2"/>
    <property type="match status" value="3"/>
</dbReference>
<dbReference type="Pfam" id="PF13912">
    <property type="entry name" value="zf-C2H2_6"/>
    <property type="match status" value="2"/>
</dbReference>
<dbReference type="SMART" id="SM00225">
    <property type="entry name" value="BTB"/>
    <property type="match status" value="1"/>
</dbReference>
<dbReference type="SMART" id="SM00355">
    <property type="entry name" value="ZnF_C2H2"/>
    <property type="match status" value="9"/>
</dbReference>
<dbReference type="SUPFAM" id="SSF57667">
    <property type="entry name" value="beta-beta-alpha zinc fingers"/>
    <property type="match status" value="4"/>
</dbReference>
<dbReference type="SUPFAM" id="SSF54695">
    <property type="entry name" value="POZ domain"/>
    <property type="match status" value="1"/>
</dbReference>
<dbReference type="PROSITE" id="PS50097">
    <property type="entry name" value="BTB"/>
    <property type="match status" value="1"/>
</dbReference>
<dbReference type="PROSITE" id="PS00028">
    <property type="entry name" value="ZINC_FINGER_C2H2_1"/>
    <property type="match status" value="8"/>
</dbReference>
<dbReference type="PROSITE" id="PS50157">
    <property type="entry name" value="ZINC_FINGER_C2H2_2"/>
    <property type="match status" value="9"/>
</dbReference>
<keyword id="KW-0002">3D-structure</keyword>
<keyword id="KW-0025">Alternative splicing</keyword>
<keyword id="KW-0160">Chromosomal rearrangement</keyword>
<keyword id="KW-0225">Disease variant</keyword>
<keyword id="KW-0238">DNA-binding</keyword>
<keyword id="KW-0991">Intellectual disability</keyword>
<keyword id="KW-0479">Metal-binding</keyword>
<keyword id="KW-0539">Nucleus</keyword>
<keyword id="KW-0597">Phosphoprotein</keyword>
<keyword id="KW-1267">Proteomics identification</keyword>
<keyword id="KW-0656">Proto-oncogene</keyword>
<keyword id="KW-1185">Reference proteome</keyword>
<keyword id="KW-0677">Repeat</keyword>
<keyword id="KW-0678">Repressor</keyword>
<keyword id="KW-0804">Transcription</keyword>
<keyword id="KW-0805">Transcription regulation</keyword>
<keyword id="KW-0833">Ubl conjugation pathway</keyword>
<keyword id="KW-0862">Zinc</keyword>
<keyword id="KW-0863">Zinc-finger</keyword>
<sequence length="673" mass="74274">MDLTKMGMIQLQNPSHPTGLLCKANQMRLAGTLCDVVIMVDSQEFHAHRTVLACTSKMFEILFHRNSQHYTLDFLSPKTFQQILEYAYTATLQAKAEDLDDLLYAAEILEIEYLEEQCLKMLETIQASDDNDTEATMADGGAEEEEDRKARYLKNIFISKHSSEESGYASVAGQSLPGPMVDQSPSVSTSFGLSAMSPTKAAVDSLMTIGQSLLQGTLQPPAGPEEPTLAGGGRHPGVAEVKTEMMQVDEVPSQDSPGAAESSISGGMGDKVEERGKEGPGTPTRSSVITSARELHYGREESAEQVPPPAEAGQAPTGRPEHPAPPPEKHLGIYSVLPNHKADAVLSMPSSVTSGLHVQPALAVSMDFSTYGGLLPQGFIQRELFSKLGELAVGMKSESRTIGEQCSVCGVELPDNEAVEQHRKLHSGMKTYGCELCGKRFLDSLRLRMHLLAHSAGAKAFVCDQCGAQFSKEDALETHRQTHTGTDMAVFCLLCGKRFQAQSALQQHMEVHAGVRSYICSECNRTFPSHTALKRHLRSHTGDHPYECEFCGSCFRDESTLKSHKRIHTGEKPYECNGCGKKFSLKHQLETHYRVHTGEKPFECKLCHQRSRDYSAMIKHLRTHNGASPYQCTICTEYCPSLSSMQKHMKGHKPEEIPPDWRIEKTYLYLCYV</sequence>
<gene>
    <name type="primary">ZBTB16</name>
    <name type="synonym">PLZF</name>
    <name type="synonym">ZNF145</name>
</gene>
<reference key="1">
    <citation type="journal article" date="1993" name="EMBO J.">
        <title>Fusion between a novel Kruppel-like zinc finger gene and the retinoic acid receptor-alpha locus due to a variant t(11;17) translocation associated with acute promyelocytic leukaemia.</title>
        <authorList>
            <person name="Chen Z."/>
            <person name="Brand N.J."/>
            <person name="Chen A."/>
            <person name="Chen S.-J."/>
            <person name="Tong J.-H."/>
            <person name="Wang Z.-Y."/>
            <person name="Waxman S."/>
            <person name="Zelent A."/>
        </authorList>
    </citation>
    <scope>NUCLEOTIDE SEQUENCE [MRNA] (ISOFORM PLZFB)</scope>
    <scope>ALTERNATIVE SPLICING</scope>
    <scope>CHROMOSOMAL TRANSLOCATION WITH RARA</scope>
    <source>
        <tissue>Heart ventricle</tissue>
    </source>
</reference>
<reference key="2">
    <citation type="journal article" date="1999" name="Proc. Natl. Acad. Sci. U.S.A.">
        <title>Genomic sequence, structural organization, molecular evolution, and aberrant rearrangement of promyelocytic leukemia zinc finger gene.</title>
        <authorList>
            <person name="Zhang T."/>
            <person name="Xiong H."/>
            <person name="Kan L.-X."/>
            <person name="Zhang C.-K."/>
            <person name="Jiao X.-F."/>
            <person name="Fu G."/>
            <person name="Zhang Q.-H."/>
            <person name="Lu L."/>
            <person name="Tong J.-H."/>
            <person name="Gu B.-W."/>
            <person name="Yu M."/>
            <person name="Liu J.-X."/>
            <person name="Licht J."/>
            <person name="Waxman S."/>
            <person name="Zelent A."/>
            <person name="Chen E."/>
            <person name="Chen S.-J."/>
        </authorList>
    </citation>
    <scope>NUCLEOTIDE SEQUENCE [GENOMIC DNA]</scope>
</reference>
<reference key="3">
    <citation type="journal article" date="2004" name="Genome Res.">
        <title>The status, quality, and expansion of the NIH full-length cDNA project: the Mammalian Gene Collection (MGC).</title>
        <authorList>
            <consortium name="The MGC Project Team"/>
        </authorList>
    </citation>
    <scope>NUCLEOTIDE SEQUENCE [LARGE SCALE MRNA] (ISOFORM PLZFB)</scope>
    <source>
        <tissue>Brain</tissue>
    </source>
</reference>
<reference key="4">
    <citation type="journal article" date="1993" name="J. Clin. Invest.">
        <title>Rearrangements of the retinoic acid receptor alpha and promyelocytic leukemia zinc finger genes resulting from t(11;17)(q23;q21) in a patient with acute promyelocytic leukemia.</title>
        <authorList>
            <person name="Chen S.-J."/>
            <person name="Zelent A."/>
            <person name="Tong J.-H."/>
            <person name="Yu H.-Q."/>
            <person name="Wang Z.-Y."/>
            <person name="Derre J."/>
            <person name="Berger R."/>
            <person name="Waxman S."/>
            <person name="Chen Z."/>
        </authorList>
    </citation>
    <scope>NUCLEOTIDE SEQUENCE [GENOMIC DNA] OF 424-455</scope>
</reference>
<reference key="5">
    <citation type="journal article" date="1999" name="Blood">
        <title>A novel BTB/POZ transcriptional repressor protein interacts with the Fanconi anemia group C protein and PLZF.</title>
        <authorList>
            <person name="Hoatlin M.E."/>
            <person name="Zhi Y."/>
            <person name="Ball H."/>
            <person name="Silvey K."/>
            <person name="Melnick A."/>
            <person name="Stone S."/>
            <person name="Arai S."/>
            <person name="Hawe N."/>
            <person name="Owen G."/>
            <person name="Zelent A."/>
            <person name="Licht J.D."/>
        </authorList>
    </citation>
    <scope>INTERACTION WITH ZBTB32</scope>
</reference>
<reference key="6">
    <citation type="journal article" date="2000" name="Mol. Cell. Biol.">
        <title>The ETO protein disrupted in t(8;21)-associated acute myeloid leukemia is a corepressor for the promyelocytic leukemia zinc finger protein.</title>
        <authorList>
            <person name="Melnick A.M."/>
            <person name="Westendorf J.J."/>
            <person name="Polinger A."/>
            <person name="Carlile G.W."/>
            <person name="Arai S."/>
            <person name="Ball H.J."/>
            <person name="Lutterbach B."/>
            <person name="Hiebert S.W."/>
            <person name="Licht J.D."/>
        </authorList>
    </citation>
    <scope>FUNCTION</scope>
    <scope>INTERACTION WITH RUNX1T1</scope>
</reference>
<reference key="7">
    <citation type="journal article" date="2001" name="Science">
        <title>Role of the ENTH domain in phosphatidylinositol-4,5-bisphosphate binding and endocytosis.</title>
        <authorList>
            <person name="Itoh T."/>
            <person name="Koshiba S."/>
            <person name="Kigawa T."/>
            <person name="Kikuchi A."/>
            <person name="Yokoyama S."/>
            <person name="Takenawa T."/>
        </authorList>
    </citation>
    <scope>INTERACTION WITH EPN1</scope>
</reference>
<reference key="8">
    <citation type="journal article" date="2003" name="Nat. Cell Biol.">
        <title>Targeting of protein ubiquitination by BTB-Cullin 3-Roc1 ubiquitin ligases.</title>
        <authorList>
            <person name="Furukawa M."/>
            <person name="He Y.J."/>
            <person name="Borchers C."/>
            <person name="Xiong Y."/>
        </authorList>
    </citation>
    <scope>FUNCTION AS AN E3 UBIQUITIN-PROTEIN LIGASE</scope>
    <scope>INTERACTION WITH CUL3</scope>
</reference>
<reference key="9">
    <citation type="journal article" date="2006" name="J. Cell. Biochem.">
        <title>A new hepatocytic isoform of PLZF lacking the BTB domain interacts with ATP7B, the Wilson disease protein, and positively regulates ERK signal transduction.</title>
        <authorList>
            <person name="Ko J.H."/>
            <person name="Son W."/>
            <person name="Bae G.Y."/>
            <person name="Kang J.H."/>
            <person name="Oh W."/>
            <person name="Yoo O.J."/>
        </authorList>
    </citation>
    <scope>INTERACTION WITH ATP7B</scope>
</reference>
<reference key="10">
    <citation type="journal article" date="2013" name="J. Biomed. Sci.">
        <title>Analysis of the interaction between Zinc finger protein 179 (Znf179) and promyelocytic leukemia zinc finger (Plzf).</title>
        <authorList>
            <person name="Lin D.Y."/>
            <person name="Huang C.C."/>
            <person name="Hsieh Y.T."/>
            <person name="Lin H.C."/>
            <person name="Pao P.C."/>
            <person name="Tsou J.H."/>
            <person name="Lai C.Y."/>
            <person name="Hung L.Y."/>
            <person name="Wang J.M."/>
            <person name="Chang W.C."/>
            <person name="Lee Y.C."/>
        </authorList>
    </citation>
    <scope>FUNCTION</scope>
    <scope>INTERACTION WITH RNF112</scope>
    <scope>SUBCELLULAR LOCATION</scope>
</reference>
<reference key="11">
    <citation type="journal article" date="1998" name="Proc. Natl. Acad. Sci. U.S.A.">
        <title>Crystal structure of the BTB domain from PLZF.</title>
        <authorList>
            <person name="Ahmad K.F."/>
            <person name="Engel C.K."/>
            <person name="Prive G.G."/>
        </authorList>
    </citation>
    <scope>X-RAY CRYSTALLOGRAPHY (1.9 ANGSTROMS) OF 6-126</scope>
</reference>
<reference key="12">
    <citation type="journal article" date="1999" name="Cancer Res.">
        <title>Structure-function studies of the BTB/POZ transcriptional repression domain from the promyelocytic leukemia zinc finger oncoprotein.</title>
        <authorList>
            <person name="Li X."/>
            <person name="Peng H."/>
            <person name="Schultz D.C."/>
            <person name="Lopez-Guisa J.M."/>
            <person name="Rauscher F.J. III"/>
            <person name="Marmorstein R."/>
        </authorList>
    </citation>
    <scope>X-RAY CRYSTALLOGRAPHY (2.0 ANGSTROMS) OF 7-122</scope>
</reference>
<reference key="13">
    <citation type="journal article" date="2008" name="J. Med. Genet.">
        <title>Biallelic loss of function of the promyelocytic leukaemia zinc finger (PLZF) gene causes severe skeletal defects and genital hypoplasia.</title>
        <authorList>
            <person name="Fischer S."/>
            <person name="Kohlhase J."/>
            <person name="Boehm D."/>
            <person name="Schweiger B."/>
            <person name="Hoffmann D."/>
            <person name="Heitmann M."/>
            <person name="Horsthemke B."/>
            <person name="Wieczorek D."/>
        </authorList>
    </citation>
    <scope>VARIANT SGYMR VAL-617</scope>
</reference>
<evidence type="ECO:0000255" key="1"/>
<evidence type="ECO:0000255" key="2">
    <source>
        <dbReference type="PROSITE-ProRule" id="PRU00037"/>
    </source>
</evidence>
<evidence type="ECO:0000255" key="3">
    <source>
        <dbReference type="PROSITE-ProRule" id="PRU00042"/>
    </source>
</evidence>
<evidence type="ECO:0000256" key="4">
    <source>
        <dbReference type="SAM" id="MobiDB-lite"/>
    </source>
</evidence>
<evidence type="ECO:0000269" key="5">
    <source>
    </source>
</evidence>
<evidence type="ECO:0000269" key="6">
    <source>
    </source>
</evidence>
<evidence type="ECO:0000269" key="7">
    <source>
    </source>
</evidence>
<evidence type="ECO:0000269" key="8">
    <source>
    </source>
</evidence>
<evidence type="ECO:0000269" key="9">
    <source>
    </source>
</evidence>
<evidence type="ECO:0000269" key="10">
    <source>
    </source>
</evidence>
<evidence type="ECO:0000269" key="11">
    <source>
    </source>
</evidence>
<evidence type="ECO:0000269" key="12">
    <source>
    </source>
</evidence>
<evidence type="ECO:0000305" key="13"/>
<evidence type="ECO:0007829" key="14">
    <source>
        <dbReference type="PDB" id="1BUO"/>
    </source>
</evidence>
<evidence type="ECO:0007829" key="15">
    <source>
        <dbReference type="PDB" id="1CS3"/>
    </source>
</evidence>
<evidence type="ECO:0007829" key="16">
    <source>
        <dbReference type="PDB" id="8YTH"/>
    </source>
</evidence>
<comment type="function">
    <text evidence="6 8 11">Acts as a transcriptional repressor (PubMed:10688654, PubMed:24359566). Transcriptional repression may be mediated through recruitment of histone deacetylases to target promoters (PubMed:10688654). May play a role in myeloid maturation and in the development and/or maintenance of other differentiated tissues. Probable substrate-recognition component of an E3 ubiquitin-protein ligase complex which mediates the ubiquitination and subsequent proteasomal degradation of target proteins (PubMed:14528312).</text>
</comment>
<comment type="pathway">
    <text>Protein modification; protein ubiquitination.</text>
</comment>
<comment type="subunit">
    <text evidence="5 6 7 8 9 11">Binds EPN1 (PubMed:11161217). Interacts with ZBTB32 and CUL3 (PubMed:10572087, PubMed:14528312). Interacts with ATP7B (PubMed:16676348). Interacts with transcriptional corepressor RUNX1T1 (via its N-terminus); the interaction increases the transcription repression activity of ZBTB16 (PubMed:10688654). Interacts (via C2H2-type zinc finger domains 1 and 2) with RNF112 (PubMed:24359566).</text>
</comment>
<comment type="interaction">
    <interactant intactId="EBI-711925">
        <id>Q05516</id>
    </interactant>
    <interactant intactId="EBI-746752">
        <id>Q9Y2J4</id>
        <label>AMOTL2</label>
    </interactant>
    <organismsDiffer>false</organismsDiffer>
    <experiments>3</experiments>
</comment>
<comment type="interaction">
    <interactant intactId="EBI-711925">
        <id>Q05516</id>
    </interactant>
    <interactant intactId="EBI-2548012">
        <id>Q9H2G9</id>
        <label>BLZF1</label>
    </interactant>
    <organismsDiffer>false</organismsDiffer>
    <experiments>3</experiments>
</comment>
<comment type="interaction">
    <interactant intactId="EBI-711925">
        <id>Q05516</id>
    </interactant>
    <interactant intactId="EBI-11530605">
        <id>Q9H257-2</id>
        <label>CARD9</label>
    </interactant>
    <organismsDiffer>false</organismsDiffer>
    <experiments>3</experiments>
</comment>
<comment type="interaction">
    <interactant intactId="EBI-711925">
        <id>Q05516</id>
    </interactant>
    <interactant intactId="EBI-10175300">
        <id>Q8TD31-3</id>
        <label>CCHCR1</label>
    </interactant>
    <organismsDiffer>false</organismsDiffer>
    <experiments>3</experiments>
</comment>
<comment type="interaction">
    <interactant intactId="EBI-711925">
        <id>Q05516</id>
    </interactant>
    <interactant intactId="EBI-739624">
        <id>Q8NHQ1</id>
        <label>CEP70</label>
    </interactant>
    <organismsDiffer>false</organismsDiffer>
    <experiments>4</experiments>
</comment>
<comment type="interaction">
    <interactant intactId="EBI-711925">
        <id>Q05516</id>
    </interactant>
    <interactant intactId="EBI-3866319">
        <id>Q9Y2V7</id>
        <label>COG6</label>
    </interactant>
    <organismsDiffer>false</organismsDiffer>
    <experiments>5</experiments>
</comment>
<comment type="interaction">
    <interactant intactId="EBI-711925">
        <id>Q05516</id>
    </interactant>
    <interactant intactId="EBI-751587">
        <id>Q9GZU7</id>
        <label>CTDSP1</label>
    </interactant>
    <organismsDiffer>false</organismsDiffer>
    <experiments>3</experiments>
</comment>
<comment type="interaction">
    <interactant intactId="EBI-711925">
        <id>Q05516</id>
    </interactant>
    <interactant intactId="EBI-352162">
        <id>P68104</id>
        <label>EEF1A1</label>
    </interactant>
    <organismsDiffer>false</organismsDiffer>
    <experiments>4</experiments>
</comment>
<comment type="interaction">
    <interactant intactId="EBI-711925">
        <id>Q05516</id>
    </interactant>
    <interactant intactId="EBI-2349927">
        <id>Q5JST6</id>
        <label>EFHC2</label>
    </interactant>
    <organismsDiffer>false</organismsDiffer>
    <experiments>3</experiments>
</comment>
<comment type="interaction">
    <interactant intactId="EBI-711925">
        <id>Q05516</id>
    </interactant>
    <interactant intactId="EBI-19153639">
        <id>Q9NTX9</id>
        <label>FAM217B</label>
    </interactant>
    <organismsDiffer>false</organismsDiffer>
    <experiments>3</experiments>
</comment>
<comment type="interaction">
    <interactant intactId="EBI-711925">
        <id>Q05516</id>
    </interactant>
    <interactant intactId="EBI-6658203">
        <id>Q86YD7</id>
        <label>FAM90A1</label>
    </interactant>
    <organismsDiffer>false</organismsDiffer>
    <experiments>3</experiments>
</comment>
<comment type="interaction">
    <interactant intactId="EBI-711925">
        <id>Q05516</id>
    </interactant>
    <interactant intactId="EBI-750641">
        <id>Q5TD97</id>
        <label>FHL5</label>
    </interactant>
    <organismsDiffer>false</organismsDiffer>
    <experiments>3</experiments>
</comment>
<comment type="interaction">
    <interactant intactId="EBI-711925">
        <id>Q05516</id>
    </interactant>
    <interactant intactId="EBI-618309">
        <id>Q08379</id>
        <label>GOLGA2</label>
    </interactant>
    <organismsDiffer>false</organismsDiffer>
    <experiments>8</experiments>
</comment>
<comment type="interaction">
    <interactant intactId="EBI-711925">
        <id>Q05516</id>
    </interactant>
    <interactant intactId="EBI-5916454">
        <id>A6NEM1</id>
        <label>GOLGA6L9</label>
    </interactant>
    <organismsDiffer>false</organismsDiffer>
    <experiments>3</experiments>
</comment>
<comment type="interaction">
    <interactant intactId="EBI-711925">
        <id>Q05516</id>
    </interactant>
    <interactant intactId="EBI-751540">
        <id>O95872</id>
        <label>GPANK1</label>
    </interactant>
    <organismsDiffer>false</organismsDiffer>
    <experiments>3</experiments>
</comment>
<comment type="interaction">
    <interactant intactId="EBI-711925">
        <id>Q05516</id>
    </interactant>
    <interactant intactId="EBI-301834">
        <id>Q13547</id>
        <label>HDAC1</label>
    </interactant>
    <organismsDiffer>false</organismsDiffer>
    <experiments>6</experiments>
</comment>
<comment type="interaction">
    <interactant intactId="EBI-711925">
        <id>Q05516</id>
    </interactant>
    <interactant intactId="EBI-7133736">
        <id>P07686</id>
        <label>HEXB</label>
    </interactant>
    <organismsDiffer>false</organismsDiffer>
    <experiments>3</experiments>
</comment>
<comment type="interaction">
    <interactant intactId="EBI-711925">
        <id>Q05516</id>
    </interactant>
    <interactant intactId="EBI-740785">
        <id>P49639</id>
        <label>HOXA1</label>
    </interactant>
    <organismsDiffer>false</organismsDiffer>
    <experiments>3</experiments>
</comment>
<comment type="interaction">
    <interactant intactId="EBI-711925">
        <id>Q05516</id>
    </interactant>
    <interactant intactId="EBI-11955357">
        <id>Q00444</id>
        <label>HOXC5</label>
    </interactant>
    <organismsDiffer>false</organismsDiffer>
    <experiments>3</experiments>
</comment>
<comment type="interaction">
    <interactant intactId="EBI-711925">
        <id>Q05516</id>
    </interactant>
    <interactant intactId="EBI-7116203">
        <id>O75031</id>
        <label>HSF2BP</label>
    </interactant>
    <organismsDiffer>false</organismsDiffer>
    <experiments>3</experiments>
</comment>
<comment type="interaction">
    <interactant intactId="EBI-711925">
        <id>Q05516</id>
    </interactant>
    <interactant intactId="EBI-466029">
        <id>P42858</id>
        <label>HTT</label>
    </interactant>
    <organismsDiffer>false</organismsDiffer>
    <experiments>4</experiments>
</comment>
<comment type="interaction">
    <interactant intactId="EBI-711925">
        <id>Q05516</id>
    </interactant>
    <interactant intactId="EBI-14069005">
        <id>Q9BVG8-5</id>
        <label>KIFC3</label>
    </interactant>
    <organismsDiffer>false</organismsDiffer>
    <experiments>3</experiments>
</comment>
<comment type="interaction">
    <interactant intactId="EBI-711925">
        <id>Q05516</id>
    </interactant>
    <interactant intactId="EBI-10171697">
        <id>Q6A162</id>
        <label>KRT40</label>
    </interactant>
    <organismsDiffer>false</organismsDiffer>
    <experiments>9</experiments>
</comment>
<comment type="interaction">
    <interactant intactId="EBI-711925">
        <id>Q05516</id>
    </interactant>
    <interactant intactId="EBI-713382">
        <id>O43504</id>
        <label>LAMTOR5</label>
    </interactant>
    <organismsDiffer>false</organismsDiffer>
    <experiments>8</experiments>
</comment>
<comment type="interaction">
    <interactant intactId="EBI-711925">
        <id>Q05516</id>
    </interactant>
    <interactant intactId="EBI-740738">
        <id>O95751</id>
        <label>LDOC1</label>
    </interactant>
    <organismsDiffer>false</organismsDiffer>
    <experiments>4</experiments>
</comment>
<comment type="interaction">
    <interactant intactId="EBI-711925">
        <id>Q05516</id>
    </interactant>
    <interactant intactId="EBI-16439278">
        <id>Q6FHY5</id>
        <label>MEOX2</label>
    </interactant>
    <organismsDiffer>false</organismsDiffer>
    <experiments>3</experiments>
</comment>
<comment type="interaction">
    <interactant intactId="EBI-711925">
        <id>Q05516</id>
    </interactant>
    <interactant intactId="EBI-10172526">
        <id>Q9UJV3-2</id>
        <label>MID2</label>
    </interactant>
    <organismsDiffer>false</organismsDiffer>
    <experiments>3</experiments>
</comment>
<comment type="interaction">
    <interactant intactId="EBI-711925">
        <id>Q05516</id>
    </interactant>
    <interactant intactId="EBI-11522433">
        <id>Q5JR59-3</id>
        <label>MTUS2</label>
    </interactant>
    <organismsDiffer>false</organismsDiffer>
    <experiments>3</experiments>
</comment>
<comment type="interaction">
    <interactant intactId="EBI-711925">
        <id>Q05516</id>
    </interactant>
    <interactant intactId="EBI-6952711">
        <id>Q8WY64</id>
        <label>MYLIP</label>
    </interactant>
    <organismsDiffer>false</organismsDiffer>
    <experiments>3</experiments>
</comment>
<comment type="interaction">
    <interactant intactId="EBI-711925">
        <id>Q05516</id>
    </interactant>
    <interactant intactId="EBI-10271199">
        <id>Q8NI38</id>
        <label>NFKBID</label>
    </interactant>
    <organismsDiffer>false</organismsDiffer>
    <experiments>3</experiments>
</comment>
<comment type="interaction">
    <interactant intactId="EBI-711925">
        <id>Q05516</id>
    </interactant>
    <interactant intactId="EBI-744871">
        <id>O00746</id>
        <label>NME4</label>
    </interactant>
    <organismsDiffer>false</organismsDiffer>
    <experiments>3</experiments>
</comment>
<comment type="interaction">
    <interactant intactId="EBI-711925">
        <id>Q05516</id>
    </interactant>
    <interactant intactId="EBI-1051317">
        <id>Q9H4L5</id>
        <label>OSBPL3</label>
    </interactant>
    <organismsDiffer>false</organismsDiffer>
    <experiments>3</experiments>
</comment>
<comment type="interaction">
    <interactant intactId="EBI-711925">
        <id>Q05516</id>
    </interactant>
    <interactant intactId="EBI-530034">
        <id>O43189</id>
        <label>PHF1</label>
    </interactant>
    <organismsDiffer>false</organismsDiffer>
    <experiments>3</experiments>
</comment>
<comment type="interaction">
    <interactant intactId="EBI-711925">
        <id>Q05516</id>
    </interactant>
    <interactant intactId="EBI-348567">
        <id>O75928-2</id>
        <label>PIAS2</label>
    </interactant>
    <organismsDiffer>false</organismsDiffer>
    <experiments>3</experiments>
</comment>
<comment type="interaction">
    <interactant intactId="EBI-711925">
        <id>Q05516</id>
    </interactant>
    <interactant intactId="EBI-14066006">
        <id>Q4G0R1</id>
        <label>PIBF1</label>
    </interactant>
    <organismsDiffer>false</organismsDiffer>
    <experiments>3</experiments>
</comment>
<comment type="interaction">
    <interactant intactId="EBI-711925">
        <id>Q05516</id>
    </interactant>
    <interactant intactId="EBI-295890">
        <id>P29590</id>
        <label>PML</label>
    </interactant>
    <organismsDiffer>false</organismsDiffer>
    <experiments>7</experiments>
</comment>
<comment type="interaction">
    <interactant intactId="EBI-711925">
        <id>Q05516</id>
    </interactant>
    <interactant intactId="EBI-304008">
        <id>P29590-5</id>
        <label>PML</label>
    </interactant>
    <organismsDiffer>false</organismsDiffer>
    <experiments>2</experiments>
</comment>
<comment type="interaction">
    <interactant intactId="EBI-711925">
        <id>Q05516</id>
    </interactant>
    <interactant intactId="EBI-2805516">
        <id>P31321</id>
        <label>PRKAR1B</label>
    </interactant>
    <organismsDiffer>false</organismsDiffer>
    <experiments>3</experiments>
</comment>
<comment type="interaction">
    <interactant intactId="EBI-711925">
        <id>Q05516</id>
    </interactant>
    <interactant intactId="EBI-11984839">
        <id>Q96QF0-7</id>
        <label>RAB3IP</label>
    </interactant>
    <organismsDiffer>false</organismsDiffer>
    <experiments>3</experiments>
</comment>
<comment type="interaction">
    <interactant intactId="EBI-711925">
        <id>Q05516</id>
    </interactant>
    <interactant intactId="EBI-10829018">
        <id>Q04864-2</id>
        <label>REL</label>
    </interactant>
    <organismsDiffer>false</organismsDiffer>
    <experiments>3</experiments>
</comment>
<comment type="interaction">
    <interactant intactId="EBI-711925">
        <id>Q05516</id>
    </interactant>
    <interactant intactId="EBI-726876">
        <id>Q6NUQ1</id>
        <label>RINT1</label>
    </interactant>
    <organismsDiffer>false</organismsDiffer>
    <experiments>3</experiments>
</comment>
<comment type="interaction">
    <interactant intactId="EBI-711925">
        <id>Q05516</id>
    </interactant>
    <interactant intactId="EBI-10308083">
        <id>Q9H788-2</id>
        <label>SH2D4A</label>
    </interactant>
    <organismsDiffer>false</organismsDiffer>
    <experiments>3</experiments>
</comment>
<comment type="interaction">
    <interactant intactId="EBI-711925">
        <id>Q05516</id>
    </interactant>
    <interactant intactId="EBI-358708">
        <id>Q9NYJ8</id>
        <label>TAB2</label>
    </interactant>
    <organismsDiffer>false</organismsDiffer>
    <experiments>3</experiments>
</comment>
<comment type="interaction">
    <interactant intactId="EBI-711925">
        <id>Q05516</id>
    </interactant>
    <interactant intactId="EBI-11741437">
        <id>Q08117-2</id>
        <label>TLE5</label>
    </interactant>
    <organismsDiffer>false</organismsDiffer>
    <experiments>3</experiments>
</comment>
<comment type="interaction">
    <interactant intactId="EBI-711925">
        <id>Q05516</id>
    </interactant>
    <interactant intactId="EBI-359224">
        <id>Q13077</id>
        <label>TRAF1</label>
    </interactant>
    <organismsDiffer>false</organismsDiffer>
    <experiments>5</experiments>
</comment>
<comment type="interaction">
    <interactant intactId="EBI-711925">
        <id>Q05516</id>
    </interactant>
    <interactant intactId="EBI-355744">
        <id>Q12933</id>
        <label>TRAF2</label>
    </interactant>
    <organismsDiffer>false</organismsDiffer>
    <experiments>5</experiments>
</comment>
<comment type="interaction">
    <interactant intactId="EBI-711925">
        <id>Q05516</id>
    </interactant>
    <interactant intactId="EBI-3650647">
        <id>Q9BUZ4</id>
        <label>TRAF4</label>
    </interactant>
    <organismsDiffer>false</organismsDiffer>
    <experiments>3</experiments>
</comment>
<comment type="interaction">
    <interactant intactId="EBI-711925">
        <id>Q05516</id>
    </interactant>
    <interactant intactId="EBI-81290">
        <id>P19474</id>
        <label>TRIM21</label>
    </interactant>
    <organismsDiffer>false</organismsDiffer>
    <experiments>3</experiments>
</comment>
<comment type="interaction">
    <interactant intactId="EBI-711925">
        <id>Q05516</id>
    </interactant>
    <interactant intactId="EBI-740098">
        <id>P36406</id>
        <label>TRIM23</label>
    </interactant>
    <organismsDiffer>false</organismsDiffer>
    <experiments>3</experiments>
</comment>
<comment type="interaction">
    <interactant intactId="EBI-711925">
        <id>Q05516</id>
    </interactant>
    <interactant intactId="EBI-719493">
        <id>P14373</id>
        <label>TRIM27</label>
    </interactant>
    <organismsDiffer>false</organismsDiffer>
    <experiments>5</experiments>
</comment>
<comment type="interaction">
    <interactant intactId="EBI-711925">
        <id>Q05516</id>
    </interactant>
    <interactant intactId="EBI-2130429">
        <id>Q9BYV2</id>
        <label>TRIM54</label>
    </interactant>
    <organismsDiffer>false</organismsDiffer>
    <experiments>6</experiments>
</comment>
<comment type="interaction">
    <interactant intactId="EBI-711925">
        <id>Q05516</id>
    </interactant>
    <interactant intactId="EBI-9090990">
        <id>Q5W5X9-3</id>
        <label>TTC23</label>
    </interactant>
    <organismsDiffer>false</organismsDiffer>
    <experiments>3</experiments>
</comment>
<comment type="interaction">
    <interactant intactId="EBI-711925">
        <id>Q05516</id>
    </interactant>
    <interactant intactId="EBI-10180829">
        <id>Q7KZS0</id>
        <label>UBE2I</label>
    </interactant>
    <organismsDiffer>false</organismsDiffer>
    <experiments>3</experiments>
</comment>
<comment type="interaction">
    <interactant intactId="EBI-711925">
        <id>Q05516</id>
    </interactant>
    <interactant intactId="EBI-740160">
        <id>Q9NP79</id>
        <label>VTA1</label>
    </interactant>
    <organismsDiffer>false</organismsDiffer>
    <experiments>4</experiments>
</comment>
<comment type="interaction">
    <interactant intactId="EBI-711925">
        <id>Q05516</id>
    </interactant>
    <interactant intactId="EBI-356498">
        <id>P62258</id>
        <label>YWHAE</label>
    </interactant>
    <organismsDiffer>false</organismsDiffer>
    <experiments>2</experiments>
</comment>
<comment type="interaction">
    <interactant intactId="EBI-711925">
        <id>Q05516</id>
    </interactant>
    <interactant intactId="EBI-711925">
        <id>Q05516</id>
        <label>ZBTB16</label>
    </interactant>
    <organismsDiffer>false</organismsDiffer>
    <experiments>8</experiments>
</comment>
<comment type="interaction">
    <interactant intactId="EBI-711925">
        <id>Q05516</id>
    </interactant>
    <interactant intactId="EBI-12287587">
        <id>B2RXF5</id>
        <label>ZBTB42</label>
    </interactant>
    <organismsDiffer>false</organismsDiffer>
    <experiments>3</experiments>
</comment>
<comment type="interaction">
    <interactant intactId="EBI-711925">
        <id>Q05516</id>
    </interactant>
    <interactant intactId="EBI-2555731">
        <id>Q9H707</id>
        <label>ZNF552</label>
    </interactant>
    <organismsDiffer>false</organismsDiffer>
    <experiments>3</experiments>
</comment>
<comment type="interaction">
    <interactant intactId="EBI-711925">
        <id>Q05516</id>
    </interactant>
    <interactant intactId="EBI-4395669">
        <id>Q6ZNG0</id>
        <label>ZNF620</label>
    </interactant>
    <organismsDiffer>false</organismsDiffer>
    <experiments>3</experiments>
</comment>
<comment type="interaction">
    <interactant intactId="EBI-711925">
        <id>Q05516</id>
    </interactant>
    <interactant intactId="EBI-625509">
        <id>Q8N720</id>
        <label>ZNF655</label>
    </interactant>
    <organismsDiffer>false</organismsDiffer>
    <experiments>3</experiments>
</comment>
<comment type="interaction">
    <interactant intactId="EBI-711925">
        <id>Q05516</id>
    </interactant>
    <interactant intactId="EBI-7109445">
        <id>O35826</id>
        <label>Gne</label>
    </interactant>
    <organismsDiffer>true</organismsDiffer>
    <experiments>2</experiments>
</comment>
<comment type="interaction">
    <interactant intactId="EBI-711925">
        <id>Q05516</id>
    </interactant>
    <interactant intactId="EBI-3957603">
        <id>P09022</id>
        <label>Hoxa1</label>
    </interactant>
    <organismsDiffer>true</organismsDiffer>
    <experiments>3</experiments>
</comment>
<comment type="subcellular location">
    <subcellularLocation>
        <location evidence="11">Nucleus</location>
    </subcellularLocation>
    <subcellularLocation>
        <location evidence="11">Nucleus</location>
        <location evidence="11">Nuclear body</location>
    </subcellularLocation>
</comment>
<comment type="alternative products">
    <event type="alternative splicing"/>
    <isoform>
        <id>Q05516-1</id>
        <name>PLZFB</name>
        <sequence type="displayed"/>
    </isoform>
    <isoform>
        <id>Q05516-2</id>
        <name>PLZFA</name>
        <sequence type="described" ref="VSP_006896"/>
    </isoform>
</comment>
<comment type="tissue specificity">
    <text>Within the hematopoietic system, PLZF is expressed in bone marrow, early myeloid cell lines and peripheral blood mononuclear cells. Also expressed in the ovary, and at lower levels, in the kidney and lung.</text>
</comment>
<comment type="induction">
    <text>By retinoic acid.</text>
</comment>
<comment type="disease" evidence="10">
    <disease id="DI-02310">
        <name>Skeletal defects, genital hypoplasia, and impaired intellectual development</name>
        <acronym>SGYMR</acronym>
        <description>A disorder characterized by intellectual disability, craniofacial dysmorphism, microcephaly and short stature. Additional features include absence of the thumbs, hypoplasia of the radii and ulnae, additional vertebrae and ribs, retarded bone age and genital hypoplasia.</description>
        <dbReference type="MIM" id="612447"/>
    </disease>
    <text>The disease is caused by variants affecting the gene represented in this entry.</text>
</comment>
<comment type="disease">
    <text evidence="12">A chromosomal aberration involving ZBTB16 may be a cause of acute promyelocytic leukemia (APL). Translocation t(11;17)(q32;q21) with RARA.</text>
</comment>
<comment type="similarity">
    <text evidence="13">Belongs to the krueppel C2H2-type zinc-finger protein family.</text>
</comment>
<comment type="online information" name="Atlas of Genetics and Cytogenetics in Oncology and Haematology">
    <link uri="https://atlasgeneticsoncology.org/gene/37/PLZF"/>
</comment>
<organism>
    <name type="scientific">Homo sapiens</name>
    <name type="common">Human</name>
    <dbReference type="NCBI Taxonomy" id="9606"/>
    <lineage>
        <taxon>Eukaryota</taxon>
        <taxon>Metazoa</taxon>
        <taxon>Chordata</taxon>
        <taxon>Craniata</taxon>
        <taxon>Vertebrata</taxon>
        <taxon>Euteleostomi</taxon>
        <taxon>Mammalia</taxon>
        <taxon>Eutheria</taxon>
        <taxon>Euarchontoglires</taxon>
        <taxon>Primates</taxon>
        <taxon>Haplorrhini</taxon>
        <taxon>Catarrhini</taxon>
        <taxon>Hominidae</taxon>
        <taxon>Homo</taxon>
    </lineage>
</organism>
<accession>Q05516</accession>
<accession>Q8TAL4</accession>